<organism>
    <name type="scientific">Salmonella paratyphi B (strain ATCC BAA-1250 / SPB7)</name>
    <dbReference type="NCBI Taxonomy" id="1016998"/>
    <lineage>
        <taxon>Bacteria</taxon>
        <taxon>Pseudomonadati</taxon>
        <taxon>Pseudomonadota</taxon>
        <taxon>Gammaproteobacteria</taxon>
        <taxon>Enterobacterales</taxon>
        <taxon>Enterobacteriaceae</taxon>
        <taxon>Salmonella</taxon>
    </lineage>
</organism>
<feature type="chain" id="PRO_1000080036" description="Integration host factor subunit alpha">
    <location>
        <begin position="1"/>
        <end position="99"/>
    </location>
</feature>
<feature type="region of interest" description="Disordered" evidence="2">
    <location>
        <begin position="49"/>
        <end position="75"/>
    </location>
</feature>
<name>IHFA_SALPB</name>
<proteinExistence type="inferred from homology"/>
<dbReference type="EMBL" id="CP000886">
    <property type="protein sequence ID" value="ABX67385.1"/>
    <property type="molecule type" value="Genomic_DNA"/>
</dbReference>
<dbReference type="RefSeq" id="WP_001229266.1">
    <property type="nucleotide sequence ID" value="NC_010102.1"/>
</dbReference>
<dbReference type="SMR" id="A9N236"/>
<dbReference type="GeneID" id="92828695"/>
<dbReference type="KEGG" id="spq:SPAB_01998"/>
<dbReference type="PATRIC" id="fig|1016998.12.peg.1886"/>
<dbReference type="HOGENOM" id="CLU_105066_1_3_6"/>
<dbReference type="BioCyc" id="SENT1016998:SPAB_RS08150-MONOMER"/>
<dbReference type="Proteomes" id="UP000008556">
    <property type="component" value="Chromosome"/>
</dbReference>
<dbReference type="GO" id="GO:0005829">
    <property type="term" value="C:cytosol"/>
    <property type="evidence" value="ECO:0007669"/>
    <property type="project" value="TreeGrafter"/>
</dbReference>
<dbReference type="GO" id="GO:0003677">
    <property type="term" value="F:DNA binding"/>
    <property type="evidence" value="ECO:0007669"/>
    <property type="project" value="UniProtKB-UniRule"/>
</dbReference>
<dbReference type="GO" id="GO:0030527">
    <property type="term" value="F:structural constituent of chromatin"/>
    <property type="evidence" value="ECO:0007669"/>
    <property type="project" value="InterPro"/>
</dbReference>
<dbReference type="GO" id="GO:0006310">
    <property type="term" value="P:DNA recombination"/>
    <property type="evidence" value="ECO:0007669"/>
    <property type="project" value="UniProtKB-UniRule"/>
</dbReference>
<dbReference type="GO" id="GO:0009893">
    <property type="term" value="P:positive regulation of metabolic process"/>
    <property type="evidence" value="ECO:0007669"/>
    <property type="project" value="UniProtKB-ARBA"/>
</dbReference>
<dbReference type="GO" id="GO:0006355">
    <property type="term" value="P:regulation of DNA-templated transcription"/>
    <property type="evidence" value="ECO:0007669"/>
    <property type="project" value="UniProtKB-UniRule"/>
</dbReference>
<dbReference type="GO" id="GO:0006417">
    <property type="term" value="P:regulation of translation"/>
    <property type="evidence" value="ECO:0007669"/>
    <property type="project" value="UniProtKB-UniRule"/>
</dbReference>
<dbReference type="CDD" id="cd13835">
    <property type="entry name" value="IHF_A"/>
    <property type="match status" value="1"/>
</dbReference>
<dbReference type="FunFam" id="4.10.520.10:FF:000002">
    <property type="entry name" value="Integration host factor subunit alpha"/>
    <property type="match status" value="1"/>
</dbReference>
<dbReference type="Gene3D" id="4.10.520.10">
    <property type="entry name" value="IHF-like DNA-binding proteins"/>
    <property type="match status" value="1"/>
</dbReference>
<dbReference type="HAMAP" id="MF_00380">
    <property type="entry name" value="IHF_alpha"/>
    <property type="match status" value="1"/>
</dbReference>
<dbReference type="InterPro" id="IPR000119">
    <property type="entry name" value="Hist_DNA-bd"/>
</dbReference>
<dbReference type="InterPro" id="IPR020816">
    <property type="entry name" value="Histone-like_DNA-bd_CS"/>
</dbReference>
<dbReference type="InterPro" id="IPR010992">
    <property type="entry name" value="IHF-like_DNA-bd_dom_sf"/>
</dbReference>
<dbReference type="InterPro" id="IPR005684">
    <property type="entry name" value="IHF_alpha"/>
</dbReference>
<dbReference type="NCBIfam" id="TIGR00987">
    <property type="entry name" value="himA"/>
    <property type="match status" value="1"/>
</dbReference>
<dbReference type="NCBIfam" id="NF001401">
    <property type="entry name" value="PRK00285.1"/>
    <property type="match status" value="1"/>
</dbReference>
<dbReference type="PANTHER" id="PTHR33175">
    <property type="entry name" value="DNA-BINDING PROTEIN HU"/>
    <property type="match status" value="1"/>
</dbReference>
<dbReference type="PANTHER" id="PTHR33175:SF2">
    <property type="entry name" value="INTEGRATION HOST FACTOR SUBUNIT ALPHA"/>
    <property type="match status" value="1"/>
</dbReference>
<dbReference type="Pfam" id="PF00216">
    <property type="entry name" value="Bac_DNA_binding"/>
    <property type="match status" value="1"/>
</dbReference>
<dbReference type="PRINTS" id="PR01727">
    <property type="entry name" value="DNABINDINGHU"/>
</dbReference>
<dbReference type="SMART" id="SM00411">
    <property type="entry name" value="BHL"/>
    <property type="match status" value="1"/>
</dbReference>
<dbReference type="SUPFAM" id="SSF47729">
    <property type="entry name" value="IHF-like DNA-binding proteins"/>
    <property type="match status" value="1"/>
</dbReference>
<dbReference type="PROSITE" id="PS00045">
    <property type="entry name" value="HISTONE_LIKE"/>
    <property type="match status" value="1"/>
</dbReference>
<reference key="1">
    <citation type="submission" date="2007-11" db="EMBL/GenBank/DDBJ databases">
        <authorList>
            <consortium name="The Salmonella enterica serovar Paratyphi B Genome Sequencing Project"/>
            <person name="McClelland M."/>
            <person name="Sanderson E.K."/>
            <person name="Porwollik S."/>
            <person name="Spieth J."/>
            <person name="Clifton W.S."/>
            <person name="Fulton R."/>
            <person name="Cordes M."/>
            <person name="Wollam A."/>
            <person name="Shah N."/>
            <person name="Pepin K."/>
            <person name="Bhonagiri V."/>
            <person name="Nash W."/>
            <person name="Johnson M."/>
            <person name="Thiruvilangam P."/>
            <person name="Wilson R."/>
        </authorList>
    </citation>
    <scope>NUCLEOTIDE SEQUENCE [LARGE SCALE GENOMIC DNA]</scope>
    <source>
        <strain>ATCC BAA-1250 / SPB7</strain>
    </source>
</reference>
<accession>A9N236</accession>
<comment type="function">
    <text evidence="1">This protein is one of the two subunits of integration host factor, a specific DNA-binding protein that functions in genetic recombination as well as in transcriptional and translational control.</text>
</comment>
<comment type="subunit">
    <text evidence="1">Heterodimer of an alpha and a beta chain.</text>
</comment>
<comment type="similarity">
    <text evidence="1">Belongs to the bacterial histone-like protein family.</text>
</comment>
<protein>
    <recommendedName>
        <fullName evidence="1">Integration host factor subunit alpha</fullName>
        <shortName evidence="1">IHF-alpha</shortName>
    </recommendedName>
</protein>
<keyword id="KW-0233">DNA recombination</keyword>
<keyword id="KW-0238">DNA-binding</keyword>
<keyword id="KW-0804">Transcription</keyword>
<keyword id="KW-0805">Transcription regulation</keyword>
<keyword id="KW-0810">Translation regulation</keyword>
<evidence type="ECO:0000255" key="1">
    <source>
        <dbReference type="HAMAP-Rule" id="MF_00380"/>
    </source>
</evidence>
<evidence type="ECO:0000256" key="2">
    <source>
        <dbReference type="SAM" id="MobiDB-lite"/>
    </source>
</evidence>
<gene>
    <name evidence="1" type="primary">ihfA</name>
    <name evidence="1" type="synonym">himA</name>
    <name type="ordered locus">SPAB_01998</name>
</gene>
<sequence>MALTKAEMSEYLFDKLGLSKRDAKELVELFFEEIRRALENGEQVKLSGFGNFDLRDKNQRPGRNPKTGEDIPITARRVVTFRPGQKLKSRVENASPKEE</sequence>